<comment type="catalytic activity">
    <reaction evidence="1">
        <text>tRNA(Cys) + L-cysteine + ATP = L-cysteinyl-tRNA(Cys) + AMP + diphosphate</text>
        <dbReference type="Rhea" id="RHEA:17773"/>
        <dbReference type="Rhea" id="RHEA-COMP:9661"/>
        <dbReference type="Rhea" id="RHEA-COMP:9679"/>
        <dbReference type="ChEBI" id="CHEBI:30616"/>
        <dbReference type="ChEBI" id="CHEBI:33019"/>
        <dbReference type="ChEBI" id="CHEBI:35235"/>
        <dbReference type="ChEBI" id="CHEBI:78442"/>
        <dbReference type="ChEBI" id="CHEBI:78517"/>
        <dbReference type="ChEBI" id="CHEBI:456215"/>
        <dbReference type="EC" id="6.1.1.16"/>
    </reaction>
</comment>
<comment type="cofactor">
    <cofactor evidence="1">
        <name>Zn(2+)</name>
        <dbReference type="ChEBI" id="CHEBI:29105"/>
    </cofactor>
    <text evidence="1">Binds 1 zinc ion per subunit.</text>
</comment>
<comment type="subunit">
    <text evidence="1">Monomer.</text>
</comment>
<comment type="subcellular location">
    <subcellularLocation>
        <location evidence="1">Cytoplasm</location>
    </subcellularLocation>
</comment>
<comment type="similarity">
    <text evidence="1">Belongs to the class-I aminoacyl-tRNA synthetase family.</text>
</comment>
<reference key="1">
    <citation type="journal article" date="2008" name="Genome Biol.">
        <title>Encapsulated in silica: genome, proteome and physiology of the thermophilic bacterium Anoxybacillus flavithermus WK1.</title>
        <authorList>
            <person name="Saw J.H."/>
            <person name="Mountain B.W."/>
            <person name="Feng L."/>
            <person name="Omelchenko M.V."/>
            <person name="Hou S."/>
            <person name="Saito J.A."/>
            <person name="Stott M.B."/>
            <person name="Li D."/>
            <person name="Zhao G."/>
            <person name="Wu J."/>
            <person name="Galperin M.Y."/>
            <person name="Koonin E.V."/>
            <person name="Makarova K.S."/>
            <person name="Wolf Y.I."/>
            <person name="Rigden D.J."/>
            <person name="Dunfield P.F."/>
            <person name="Wang L."/>
            <person name="Alam M."/>
        </authorList>
    </citation>
    <scope>NUCLEOTIDE SEQUENCE [LARGE SCALE GENOMIC DNA]</scope>
    <source>
        <strain>DSM 21510 / WK1</strain>
    </source>
</reference>
<keyword id="KW-0030">Aminoacyl-tRNA synthetase</keyword>
<keyword id="KW-0067">ATP-binding</keyword>
<keyword id="KW-0963">Cytoplasm</keyword>
<keyword id="KW-0436">Ligase</keyword>
<keyword id="KW-0479">Metal-binding</keyword>
<keyword id="KW-0547">Nucleotide-binding</keyword>
<keyword id="KW-0597">Phosphoprotein</keyword>
<keyword id="KW-0648">Protein biosynthesis</keyword>
<keyword id="KW-0862">Zinc</keyword>
<evidence type="ECO:0000255" key="1">
    <source>
        <dbReference type="HAMAP-Rule" id="MF_00041"/>
    </source>
</evidence>
<gene>
    <name evidence="1" type="primary">cysS</name>
    <name type="ordered locus">Aflv_0084</name>
</gene>
<proteinExistence type="inferred from homology"/>
<accession>B7GJ46</accession>
<sequence>MSIQVYNTLTRKKEPFIPLEPNKVKMYVCGPTVYNYIHIGNARPAIVFDTIRRYLQFRGYEVQYVSNFTDVDDKLIRAARELGEDVPTIAERFIEAYFEDITALGCKKADVHPRVTENIDTIIQFIEQLIEKGYAYEVDGDVYYRTRRFSDYGKLSHQSVDELKSGARIEVGEKKEDPLDFALWKAAKEGEIYWDSPWGKGRPGWHIECSAMARKYLGDTIDIHAGGQDLTFPHHENEIAQSEALTGKPFAKYWLHNGYINIDNEKMSKSLGNFILVHDIIKQVDPQVLRFFMLSVHYRHPINYSQPLLESARSGLERLKTAYANLKHRLESSTNLTTNDEQWLAKIEELRNEFIREMDDDFNTANGIAVLFELAKQANVYLMENHTSQQVIQAFLQQFEQLFDVLGLSLQQDELLDEEIEALIQQRIEARKNRDFALADRIRDELKAKNIILEDTPQGTRWRRG</sequence>
<protein>
    <recommendedName>
        <fullName evidence="1">Cysteine--tRNA ligase</fullName>
        <ecNumber evidence="1">6.1.1.16</ecNumber>
    </recommendedName>
    <alternativeName>
        <fullName evidence="1">Cysteinyl-tRNA synthetase</fullName>
        <shortName evidence="1">CysRS</shortName>
    </alternativeName>
</protein>
<name>SYC_ANOFW</name>
<organism>
    <name type="scientific">Anoxybacillus flavithermus (strain DSM 21510 / WK1)</name>
    <dbReference type="NCBI Taxonomy" id="491915"/>
    <lineage>
        <taxon>Bacteria</taxon>
        <taxon>Bacillati</taxon>
        <taxon>Bacillota</taxon>
        <taxon>Bacilli</taxon>
        <taxon>Bacillales</taxon>
        <taxon>Anoxybacillaceae</taxon>
        <taxon>Anoxybacillus</taxon>
    </lineage>
</organism>
<feature type="chain" id="PRO_1000199032" description="Cysteine--tRNA ligase">
    <location>
        <begin position="1"/>
        <end position="465"/>
    </location>
</feature>
<feature type="short sequence motif" description="'HIGH' region">
    <location>
        <begin position="31"/>
        <end position="41"/>
    </location>
</feature>
<feature type="short sequence motif" description="'KMSKS' region">
    <location>
        <begin position="266"/>
        <end position="270"/>
    </location>
</feature>
<feature type="binding site" evidence="1">
    <location>
        <position position="29"/>
    </location>
    <ligand>
        <name>Zn(2+)</name>
        <dbReference type="ChEBI" id="CHEBI:29105"/>
    </ligand>
</feature>
<feature type="binding site" evidence="1">
    <location>
        <position position="209"/>
    </location>
    <ligand>
        <name>Zn(2+)</name>
        <dbReference type="ChEBI" id="CHEBI:29105"/>
    </ligand>
</feature>
<feature type="binding site" evidence="1">
    <location>
        <position position="234"/>
    </location>
    <ligand>
        <name>Zn(2+)</name>
        <dbReference type="ChEBI" id="CHEBI:29105"/>
    </ligand>
</feature>
<feature type="binding site" evidence="1">
    <location>
        <position position="238"/>
    </location>
    <ligand>
        <name>Zn(2+)</name>
        <dbReference type="ChEBI" id="CHEBI:29105"/>
    </ligand>
</feature>
<feature type="binding site" evidence="1">
    <location>
        <position position="269"/>
    </location>
    <ligand>
        <name>ATP</name>
        <dbReference type="ChEBI" id="CHEBI:30616"/>
    </ligand>
</feature>
<feature type="modified residue" description="Phosphoserine" evidence="1">
    <location>
        <position position="270"/>
    </location>
</feature>
<dbReference type="EC" id="6.1.1.16" evidence="1"/>
<dbReference type="EMBL" id="CP000922">
    <property type="protein sequence ID" value="ACJ32468.1"/>
    <property type="molecule type" value="Genomic_DNA"/>
</dbReference>
<dbReference type="RefSeq" id="WP_012573845.1">
    <property type="nucleotide sequence ID" value="NC_011567.1"/>
</dbReference>
<dbReference type="SMR" id="B7GJ46"/>
<dbReference type="STRING" id="491915.Aflv_0084"/>
<dbReference type="GeneID" id="7036283"/>
<dbReference type="KEGG" id="afl:Aflv_0084"/>
<dbReference type="PATRIC" id="fig|491915.6.peg.84"/>
<dbReference type="eggNOG" id="COG0215">
    <property type="taxonomic scope" value="Bacteria"/>
</dbReference>
<dbReference type="HOGENOM" id="CLU_013528_0_1_9"/>
<dbReference type="Proteomes" id="UP000000742">
    <property type="component" value="Chromosome"/>
</dbReference>
<dbReference type="GO" id="GO:0005829">
    <property type="term" value="C:cytosol"/>
    <property type="evidence" value="ECO:0007669"/>
    <property type="project" value="TreeGrafter"/>
</dbReference>
<dbReference type="GO" id="GO:0005524">
    <property type="term" value="F:ATP binding"/>
    <property type="evidence" value="ECO:0007669"/>
    <property type="project" value="UniProtKB-UniRule"/>
</dbReference>
<dbReference type="GO" id="GO:0004817">
    <property type="term" value="F:cysteine-tRNA ligase activity"/>
    <property type="evidence" value="ECO:0007669"/>
    <property type="project" value="UniProtKB-UniRule"/>
</dbReference>
<dbReference type="GO" id="GO:0008270">
    <property type="term" value="F:zinc ion binding"/>
    <property type="evidence" value="ECO:0007669"/>
    <property type="project" value="UniProtKB-UniRule"/>
</dbReference>
<dbReference type="GO" id="GO:0006423">
    <property type="term" value="P:cysteinyl-tRNA aminoacylation"/>
    <property type="evidence" value="ECO:0007669"/>
    <property type="project" value="UniProtKB-UniRule"/>
</dbReference>
<dbReference type="CDD" id="cd07963">
    <property type="entry name" value="Anticodon_Ia_Cys"/>
    <property type="match status" value="1"/>
</dbReference>
<dbReference type="CDD" id="cd00672">
    <property type="entry name" value="CysRS_core"/>
    <property type="match status" value="1"/>
</dbReference>
<dbReference type="FunFam" id="1.20.120.1910:FF:000002">
    <property type="entry name" value="Cysteine--tRNA ligase"/>
    <property type="match status" value="1"/>
</dbReference>
<dbReference type="FunFam" id="3.40.50.620:FF:000009">
    <property type="entry name" value="Cysteine--tRNA ligase"/>
    <property type="match status" value="1"/>
</dbReference>
<dbReference type="Gene3D" id="1.20.120.1910">
    <property type="entry name" value="Cysteine-tRNA ligase, C-terminal anti-codon recognition domain"/>
    <property type="match status" value="1"/>
</dbReference>
<dbReference type="Gene3D" id="3.40.50.620">
    <property type="entry name" value="HUPs"/>
    <property type="match status" value="1"/>
</dbReference>
<dbReference type="HAMAP" id="MF_00041">
    <property type="entry name" value="Cys_tRNA_synth"/>
    <property type="match status" value="1"/>
</dbReference>
<dbReference type="InterPro" id="IPR015803">
    <property type="entry name" value="Cys-tRNA-ligase"/>
</dbReference>
<dbReference type="InterPro" id="IPR015273">
    <property type="entry name" value="Cys-tRNA-synt_Ia_DALR"/>
</dbReference>
<dbReference type="InterPro" id="IPR024909">
    <property type="entry name" value="Cys-tRNA/MSH_ligase"/>
</dbReference>
<dbReference type="InterPro" id="IPR056411">
    <property type="entry name" value="CysS_C"/>
</dbReference>
<dbReference type="InterPro" id="IPR014729">
    <property type="entry name" value="Rossmann-like_a/b/a_fold"/>
</dbReference>
<dbReference type="InterPro" id="IPR032678">
    <property type="entry name" value="tRNA-synt_1_cat_dom"/>
</dbReference>
<dbReference type="InterPro" id="IPR009080">
    <property type="entry name" value="tRNAsynth_Ia_anticodon-bd"/>
</dbReference>
<dbReference type="NCBIfam" id="TIGR00435">
    <property type="entry name" value="cysS"/>
    <property type="match status" value="1"/>
</dbReference>
<dbReference type="PANTHER" id="PTHR10890:SF3">
    <property type="entry name" value="CYSTEINE--TRNA LIGASE, CYTOPLASMIC"/>
    <property type="match status" value="1"/>
</dbReference>
<dbReference type="PANTHER" id="PTHR10890">
    <property type="entry name" value="CYSTEINYL-TRNA SYNTHETASE"/>
    <property type="match status" value="1"/>
</dbReference>
<dbReference type="Pfam" id="PF23493">
    <property type="entry name" value="CysS_C"/>
    <property type="match status" value="1"/>
</dbReference>
<dbReference type="Pfam" id="PF09190">
    <property type="entry name" value="DALR_2"/>
    <property type="match status" value="1"/>
</dbReference>
<dbReference type="Pfam" id="PF01406">
    <property type="entry name" value="tRNA-synt_1e"/>
    <property type="match status" value="1"/>
</dbReference>
<dbReference type="PRINTS" id="PR00983">
    <property type="entry name" value="TRNASYNTHCYS"/>
</dbReference>
<dbReference type="SMART" id="SM00840">
    <property type="entry name" value="DALR_2"/>
    <property type="match status" value="1"/>
</dbReference>
<dbReference type="SUPFAM" id="SSF47323">
    <property type="entry name" value="Anticodon-binding domain of a subclass of class I aminoacyl-tRNA synthetases"/>
    <property type="match status" value="1"/>
</dbReference>
<dbReference type="SUPFAM" id="SSF52374">
    <property type="entry name" value="Nucleotidylyl transferase"/>
    <property type="match status" value="1"/>
</dbReference>